<organism>
    <name type="scientific">Bacillus cereus (strain AH187)</name>
    <dbReference type="NCBI Taxonomy" id="405534"/>
    <lineage>
        <taxon>Bacteria</taxon>
        <taxon>Bacillati</taxon>
        <taxon>Bacillota</taxon>
        <taxon>Bacilli</taxon>
        <taxon>Bacillales</taxon>
        <taxon>Bacillaceae</taxon>
        <taxon>Bacillus</taxon>
        <taxon>Bacillus cereus group</taxon>
    </lineage>
</organism>
<name>SEPF_BACC7</name>
<reference key="1">
    <citation type="submission" date="2008-10" db="EMBL/GenBank/DDBJ databases">
        <title>Genome sequence of Bacillus cereus AH187.</title>
        <authorList>
            <person name="Dodson R.J."/>
            <person name="Durkin A.S."/>
            <person name="Rosovitz M.J."/>
            <person name="Rasko D.A."/>
            <person name="Kolsto A.B."/>
            <person name="Okstad O.A."/>
            <person name="Ravel J."/>
            <person name="Sutton G."/>
        </authorList>
    </citation>
    <scope>NUCLEOTIDE SEQUENCE [LARGE SCALE GENOMIC DNA]</scope>
    <source>
        <strain>AH187</strain>
    </source>
</reference>
<gene>
    <name evidence="1" type="primary">sepF</name>
    <name type="ordered locus">BCAH187_A3951</name>
</gene>
<comment type="function">
    <text evidence="1">Cell division protein that is part of the divisome complex and is recruited early to the Z-ring. Probably stimulates Z-ring formation, perhaps through the cross-linking of FtsZ protofilaments. Its function overlaps with FtsA.</text>
</comment>
<comment type="subunit">
    <text evidence="1">Homodimer. Interacts with FtsZ.</text>
</comment>
<comment type="subcellular location">
    <subcellularLocation>
        <location evidence="1">Cytoplasm</location>
    </subcellularLocation>
    <text evidence="1">Localizes to the division site, in a FtsZ-dependent manner.</text>
</comment>
<comment type="similarity">
    <text evidence="1">Belongs to the SepF family.</text>
</comment>
<sequence length="156" mass="17743">MSWSKVKYFFFDTPEEKEAAQYSYEKEQTDMKKQQDPPEQQDVTFPKAQTKQNVVSIETAKQSSKVVLLEPRTYSEAQGIADHLKGRRAVVINLQRMSTDQAVRIVDFLSGTVYAIGGDIQKIGPKTFMCTPENVDIVGAISELFGEEEDTNIKRW</sequence>
<protein>
    <recommendedName>
        <fullName evidence="1">Cell division protein SepF</fullName>
    </recommendedName>
</protein>
<accession>B7HM19</accession>
<dbReference type="EMBL" id="CP001177">
    <property type="protein sequence ID" value="ACJ82357.1"/>
    <property type="molecule type" value="Genomic_DNA"/>
</dbReference>
<dbReference type="SMR" id="B7HM19"/>
<dbReference type="KEGG" id="bcr:BCAH187_A3951"/>
<dbReference type="HOGENOM" id="CLU_078499_4_1_9"/>
<dbReference type="Proteomes" id="UP000002214">
    <property type="component" value="Chromosome"/>
</dbReference>
<dbReference type="GO" id="GO:0005737">
    <property type="term" value="C:cytoplasm"/>
    <property type="evidence" value="ECO:0007669"/>
    <property type="project" value="UniProtKB-SubCell"/>
</dbReference>
<dbReference type="GO" id="GO:0000917">
    <property type="term" value="P:division septum assembly"/>
    <property type="evidence" value="ECO:0007669"/>
    <property type="project" value="UniProtKB-KW"/>
</dbReference>
<dbReference type="GO" id="GO:0043093">
    <property type="term" value="P:FtsZ-dependent cytokinesis"/>
    <property type="evidence" value="ECO:0007669"/>
    <property type="project" value="UniProtKB-UniRule"/>
</dbReference>
<dbReference type="Gene3D" id="3.30.110.150">
    <property type="entry name" value="SepF-like protein"/>
    <property type="match status" value="1"/>
</dbReference>
<dbReference type="HAMAP" id="MF_01197">
    <property type="entry name" value="SepF"/>
    <property type="match status" value="1"/>
</dbReference>
<dbReference type="InterPro" id="IPR023052">
    <property type="entry name" value="Cell_div_SepF"/>
</dbReference>
<dbReference type="InterPro" id="IPR007561">
    <property type="entry name" value="Cell_div_SepF/SepF-rel"/>
</dbReference>
<dbReference type="InterPro" id="IPR038594">
    <property type="entry name" value="SepF-like_sf"/>
</dbReference>
<dbReference type="PANTHER" id="PTHR35798">
    <property type="entry name" value="CELL DIVISION PROTEIN SEPF"/>
    <property type="match status" value="1"/>
</dbReference>
<dbReference type="PANTHER" id="PTHR35798:SF1">
    <property type="entry name" value="CELL DIVISION PROTEIN SEPF"/>
    <property type="match status" value="1"/>
</dbReference>
<dbReference type="Pfam" id="PF04472">
    <property type="entry name" value="SepF"/>
    <property type="match status" value="1"/>
</dbReference>
<feature type="chain" id="PRO_1000138461" description="Cell division protein SepF">
    <location>
        <begin position="1"/>
        <end position="156"/>
    </location>
</feature>
<feature type="region of interest" description="Disordered" evidence="2">
    <location>
        <begin position="23"/>
        <end position="48"/>
    </location>
</feature>
<feature type="compositionally biased region" description="Basic and acidic residues" evidence="2">
    <location>
        <begin position="23"/>
        <end position="36"/>
    </location>
</feature>
<feature type="compositionally biased region" description="Polar residues" evidence="2">
    <location>
        <begin position="37"/>
        <end position="48"/>
    </location>
</feature>
<proteinExistence type="inferred from homology"/>
<keyword id="KW-0131">Cell cycle</keyword>
<keyword id="KW-0132">Cell division</keyword>
<keyword id="KW-0963">Cytoplasm</keyword>
<keyword id="KW-0717">Septation</keyword>
<evidence type="ECO:0000255" key="1">
    <source>
        <dbReference type="HAMAP-Rule" id="MF_01197"/>
    </source>
</evidence>
<evidence type="ECO:0000256" key="2">
    <source>
        <dbReference type="SAM" id="MobiDB-lite"/>
    </source>
</evidence>